<accession>Q9SZQ5</accession>
<proteinExistence type="evidence at protein level"/>
<protein>
    <recommendedName>
        <fullName evidence="14">WD repeat-containing protein VIP3</fullName>
    </recommendedName>
    <alternativeName>
        <fullName evidence="13">Protein BOUQUET-1</fullName>
        <shortName evidence="13">boq-1</shortName>
    </alternativeName>
    <alternativeName>
        <fullName evidence="11">Protein SKI8 homolog</fullName>
    </alternativeName>
    <alternativeName>
        <fullName evidence="10">Protein VERNALIZATION INDEPENDENCE 3</fullName>
    </alternativeName>
    <alternativeName>
        <fullName evidence="12">Protein ZWERGERL</fullName>
        <shortName>zwg</shortName>
    </alternativeName>
</protein>
<evidence type="ECO:0000255" key="1"/>
<evidence type="ECO:0000269" key="2">
    <source>
    </source>
</evidence>
<evidence type="ECO:0000269" key="3">
    <source>
    </source>
</evidence>
<evidence type="ECO:0000269" key="4">
    <source>
    </source>
</evidence>
<evidence type="ECO:0000269" key="5">
    <source>
    </source>
</evidence>
<evidence type="ECO:0000269" key="6">
    <source>
    </source>
</evidence>
<evidence type="ECO:0000269" key="7">
    <source>
    </source>
</evidence>
<evidence type="ECO:0000269" key="8">
    <source>
    </source>
</evidence>
<evidence type="ECO:0000269" key="9">
    <source>
    </source>
</evidence>
<evidence type="ECO:0000303" key="10">
    <source>
    </source>
</evidence>
<evidence type="ECO:0000303" key="11">
    <source>
    </source>
</evidence>
<evidence type="ECO:0000303" key="12">
    <source>
    </source>
</evidence>
<evidence type="ECO:0000303" key="13">
    <source>
    </source>
</evidence>
<evidence type="ECO:0000305" key="14"/>
<evidence type="ECO:0000312" key="15">
    <source>
        <dbReference type="Araport" id="AT4G29830"/>
    </source>
</evidence>
<evidence type="ECO:0000312" key="16">
    <source>
        <dbReference type="EMBL" id="CAB43658.1"/>
    </source>
</evidence>
<comment type="function">
    <text evidence="2 4 5 6 8 9">Component of the PAF1 complex (PAF1C) which is involved in histone modifications such as methylation on histone H3 'Lys-4' (H3K4me3) (PubMed:20363855). Involved in regulation of flowering time. Required for the expression of the flowering repressor and MADS box gene FLC (PubMed:12750345, PubMed:18725930). Required for histone H3 trimethylation on 'Lys-4' (H3K4me3) and histone dimethylation on 'Lys-36' (H3K36me2) at the FLC locus. Prevents trimethylation on 'Lys-27' (H3K27me3) at the same locus (PubMed:18725930). Not required for meiotic recombination or progression (PubMed:16716192). Component of the SKI complex which is thought to be involved in exosome-mediated RNA decay and associates with transcriptionally active genes in a manner dependent on PAF1 complex (PAF1C) (PubMed:22511887). Required for proper progression of cell differentiation process (PubMed:23134555).</text>
</comment>
<comment type="subunit">
    <text evidence="3 6 8">Component of the nuclear PAF1 complex (PAF1C), which consists of VIP2/ELF7/PAF1, VIP3/SKI8/WDR61, VIP4/LEO1, VIP5/RTF1, VIP6/ELF8/CTR9 and CDC73 (PubMed:20363855). Component of the cytoplasmic SKI complex, which consists of SKI2, SKI3 and VIP3/SKI8 (PubMed:22511887). Interacts with VIP4 and VIP6 (PubMed:15472079).</text>
</comment>
<comment type="interaction">
    <interactant intactId="EBI-1632819">
        <id>Q9SZQ5</id>
    </interactant>
    <interactant intactId="EBI-1632780">
        <id>Q9M0V3</id>
        <label>DDB1A</label>
    </interactant>
    <organismsDiffer>false</organismsDiffer>
    <experiments>2</experiments>
</comment>
<comment type="subcellular location">
    <subcellularLocation>
        <location evidence="6 7 8">Nucleus</location>
    </subcellularLocation>
    <subcellularLocation>
        <location evidence="8">Cytoplasm</location>
    </subcellularLocation>
</comment>
<comment type="disruption phenotype">
    <text evidence="2 4 9">Early flowering, reduced plant size and defects in floral morphology in whorls 1-3, but fully fertile flowers (PubMed:12750345, PubMed:16716192). Growth defects due to extra shoot apical meristem (SAM) formation (PubMed:23134555).</text>
</comment>
<name>VIP3_ARATH</name>
<organism>
    <name type="scientific">Arabidopsis thaliana</name>
    <name type="common">Mouse-ear cress</name>
    <dbReference type="NCBI Taxonomy" id="3702"/>
    <lineage>
        <taxon>Eukaryota</taxon>
        <taxon>Viridiplantae</taxon>
        <taxon>Streptophyta</taxon>
        <taxon>Embryophyta</taxon>
        <taxon>Tracheophyta</taxon>
        <taxon>Spermatophyta</taxon>
        <taxon>Magnoliopsida</taxon>
        <taxon>eudicotyledons</taxon>
        <taxon>Gunneridae</taxon>
        <taxon>Pentapetalae</taxon>
        <taxon>rosids</taxon>
        <taxon>malvids</taxon>
        <taxon>Brassicales</taxon>
        <taxon>Brassicaceae</taxon>
        <taxon>Camelineae</taxon>
        <taxon>Arabidopsis</taxon>
    </lineage>
</organism>
<keyword id="KW-0963">Cytoplasm</keyword>
<keyword id="KW-0287">Flowering</keyword>
<keyword id="KW-0539">Nucleus</keyword>
<keyword id="KW-1185">Reference proteome</keyword>
<keyword id="KW-0677">Repeat</keyword>
<keyword id="KW-0804">Transcription</keyword>
<keyword id="KW-0805">Transcription regulation</keyword>
<keyword id="KW-0853">WD repeat</keyword>
<feature type="chain" id="PRO_0000432759" description="WD repeat-containing protein VIP3">
    <location>
        <begin position="1"/>
        <end position="321"/>
    </location>
</feature>
<feature type="repeat" description="WD 1" evidence="1">
    <location>
        <begin position="12"/>
        <end position="55"/>
    </location>
</feature>
<feature type="repeat" description="WD 2" evidence="1">
    <location>
        <begin position="58"/>
        <end position="97"/>
    </location>
</feature>
<feature type="repeat" description="WD 3" evidence="1">
    <location>
        <begin position="100"/>
        <end position="140"/>
    </location>
</feature>
<feature type="repeat" description="WD 4" evidence="1">
    <location>
        <begin position="156"/>
        <end position="195"/>
    </location>
</feature>
<feature type="repeat" description="WD 5" evidence="1">
    <location>
        <begin position="198"/>
        <end position="238"/>
    </location>
</feature>
<feature type="repeat" description="WD 6" evidence="1">
    <location>
        <begin position="241"/>
        <end position="280"/>
    </location>
</feature>
<feature type="repeat" description="WD 7" evidence="1">
    <location>
        <begin position="283"/>
        <end position="319"/>
    </location>
</feature>
<sequence>MKLAGLKSIENAHEDSVWAATWVPATEDRPALLLTGSLDETVKLWRPDELDLVRTNTGHSLGVAALAAHPSGIIAASSSIDSFVRVFDVDTNATIAVLEAPPSEVWGMQFEPKGTILAVAGGSSASVKLWDTASWRLISTLSIPRPDAPKPSDKTSSKKFVLSVAWSPNGKRLACGSMDGTICVFDVDRSKLLHQLEGHNMPVRSLVFSPVDPRVLFSGSDDGHVNMHDAEGKTLLGSMSGHTSWVLSVDASPDGGAIATGSSDRTVRLWDLKMRAAIQTMSNHNDQVWSVAFRPPGGTGVRAGRLASVSDDKSVSLYDYS</sequence>
<reference key="1">
    <citation type="journal article" date="1999" name="Nature">
        <title>Sequence and analysis of chromosome 4 of the plant Arabidopsis thaliana.</title>
        <authorList>
            <person name="Mayer K.F.X."/>
            <person name="Schueller C."/>
            <person name="Wambutt R."/>
            <person name="Murphy G."/>
            <person name="Volckaert G."/>
            <person name="Pohl T."/>
            <person name="Duesterhoeft A."/>
            <person name="Stiekema W."/>
            <person name="Entian K.-D."/>
            <person name="Terryn N."/>
            <person name="Harris B."/>
            <person name="Ansorge W."/>
            <person name="Brandt P."/>
            <person name="Grivell L.A."/>
            <person name="Rieger M."/>
            <person name="Weichselgartner M."/>
            <person name="de Simone V."/>
            <person name="Obermaier B."/>
            <person name="Mache R."/>
            <person name="Mueller M."/>
            <person name="Kreis M."/>
            <person name="Delseny M."/>
            <person name="Puigdomenech P."/>
            <person name="Watson M."/>
            <person name="Schmidtheini T."/>
            <person name="Reichert B."/>
            <person name="Portetelle D."/>
            <person name="Perez-Alonso M."/>
            <person name="Boutry M."/>
            <person name="Bancroft I."/>
            <person name="Vos P."/>
            <person name="Hoheisel J."/>
            <person name="Zimmermann W."/>
            <person name="Wedler H."/>
            <person name="Ridley P."/>
            <person name="Langham S.-A."/>
            <person name="McCullagh B."/>
            <person name="Bilham L."/>
            <person name="Robben J."/>
            <person name="van der Schueren J."/>
            <person name="Grymonprez B."/>
            <person name="Chuang Y.-J."/>
            <person name="Vandenbussche F."/>
            <person name="Braeken M."/>
            <person name="Weltjens I."/>
            <person name="Voet M."/>
            <person name="Bastiaens I."/>
            <person name="Aert R."/>
            <person name="Defoor E."/>
            <person name="Weitzenegger T."/>
            <person name="Bothe G."/>
            <person name="Ramsperger U."/>
            <person name="Hilbert H."/>
            <person name="Braun M."/>
            <person name="Holzer E."/>
            <person name="Brandt A."/>
            <person name="Peters S."/>
            <person name="van Staveren M."/>
            <person name="Dirkse W."/>
            <person name="Mooijman P."/>
            <person name="Klein Lankhorst R."/>
            <person name="Rose M."/>
            <person name="Hauf J."/>
            <person name="Koetter P."/>
            <person name="Berneiser S."/>
            <person name="Hempel S."/>
            <person name="Feldpausch M."/>
            <person name="Lamberth S."/>
            <person name="Van den Daele H."/>
            <person name="De Keyser A."/>
            <person name="Buysshaert C."/>
            <person name="Gielen J."/>
            <person name="Villarroel R."/>
            <person name="De Clercq R."/>
            <person name="van Montagu M."/>
            <person name="Rogers J."/>
            <person name="Cronin A."/>
            <person name="Quail M.A."/>
            <person name="Bray-Allen S."/>
            <person name="Clark L."/>
            <person name="Doggett J."/>
            <person name="Hall S."/>
            <person name="Kay M."/>
            <person name="Lennard N."/>
            <person name="McLay K."/>
            <person name="Mayes R."/>
            <person name="Pettett A."/>
            <person name="Rajandream M.A."/>
            <person name="Lyne M."/>
            <person name="Benes V."/>
            <person name="Rechmann S."/>
            <person name="Borkova D."/>
            <person name="Bloecker H."/>
            <person name="Scharfe M."/>
            <person name="Grimm M."/>
            <person name="Loehnert T.-H."/>
            <person name="Dose S."/>
            <person name="de Haan M."/>
            <person name="Maarse A.C."/>
            <person name="Schaefer M."/>
            <person name="Mueller-Auer S."/>
            <person name="Gabel C."/>
            <person name="Fuchs M."/>
            <person name="Fartmann B."/>
            <person name="Granderath K."/>
            <person name="Dauner D."/>
            <person name="Herzl A."/>
            <person name="Neumann S."/>
            <person name="Argiriou A."/>
            <person name="Vitale D."/>
            <person name="Liguori R."/>
            <person name="Piravandi E."/>
            <person name="Massenet O."/>
            <person name="Quigley F."/>
            <person name="Clabauld G."/>
            <person name="Muendlein A."/>
            <person name="Felber R."/>
            <person name="Schnabl S."/>
            <person name="Hiller R."/>
            <person name="Schmidt W."/>
            <person name="Lecharny A."/>
            <person name="Aubourg S."/>
            <person name="Chefdor F."/>
            <person name="Cooke R."/>
            <person name="Berger C."/>
            <person name="Monfort A."/>
            <person name="Casacuberta E."/>
            <person name="Gibbons T."/>
            <person name="Weber N."/>
            <person name="Vandenbol M."/>
            <person name="Bargues M."/>
            <person name="Terol J."/>
            <person name="Torres A."/>
            <person name="Perez-Perez A."/>
            <person name="Purnelle B."/>
            <person name="Bent E."/>
            <person name="Johnson S."/>
            <person name="Tacon D."/>
            <person name="Jesse T."/>
            <person name="Heijnen L."/>
            <person name="Schwarz S."/>
            <person name="Scholler P."/>
            <person name="Heber S."/>
            <person name="Francs P."/>
            <person name="Bielke C."/>
            <person name="Frishman D."/>
            <person name="Haase D."/>
            <person name="Lemcke K."/>
            <person name="Mewes H.-W."/>
            <person name="Stocker S."/>
            <person name="Zaccaria P."/>
            <person name="Bevan M."/>
            <person name="Wilson R.K."/>
            <person name="de la Bastide M."/>
            <person name="Habermann K."/>
            <person name="Parnell L."/>
            <person name="Dedhia N."/>
            <person name="Gnoj L."/>
            <person name="Schutz K."/>
            <person name="Huang E."/>
            <person name="Spiegel L."/>
            <person name="Sekhon M."/>
            <person name="Murray J."/>
            <person name="Sheet P."/>
            <person name="Cordes M."/>
            <person name="Abu-Threideh J."/>
            <person name="Stoneking T."/>
            <person name="Kalicki J."/>
            <person name="Graves T."/>
            <person name="Harmon G."/>
            <person name="Edwards J."/>
            <person name="Latreille P."/>
            <person name="Courtney L."/>
            <person name="Cloud J."/>
            <person name="Abbott A."/>
            <person name="Scott K."/>
            <person name="Johnson D."/>
            <person name="Minx P."/>
            <person name="Bentley D."/>
            <person name="Fulton B."/>
            <person name="Miller N."/>
            <person name="Greco T."/>
            <person name="Kemp K."/>
            <person name="Kramer J."/>
            <person name="Fulton L."/>
            <person name="Mardis E."/>
            <person name="Dante M."/>
            <person name="Pepin K."/>
            <person name="Hillier L.W."/>
            <person name="Nelson J."/>
            <person name="Spieth J."/>
            <person name="Ryan E."/>
            <person name="Andrews S."/>
            <person name="Geisel C."/>
            <person name="Layman D."/>
            <person name="Du H."/>
            <person name="Ali J."/>
            <person name="Berghoff A."/>
            <person name="Jones K."/>
            <person name="Drone K."/>
            <person name="Cotton M."/>
            <person name="Joshu C."/>
            <person name="Antonoiu B."/>
            <person name="Zidanic M."/>
            <person name="Strong C."/>
            <person name="Sun H."/>
            <person name="Lamar B."/>
            <person name="Yordan C."/>
            <person name="Ma P."/>
            <person name="Zhong J."/>
            <person name="Preston R."/>
            <person name="Vil D."/>
            <person name="Shekher M."/>
            <person name="Matero A."/>
            <person name="Shah R."/>
            <person name="Swaby I.K."/>
            <person name="O'Shaughnessy A."/>
            <person name="Rodriguez M."/>
            <person name="Hoffman J."/>
            <person name="Till S."/>
            <person name="Granat S."/>
            <person name="Shohdy N."/>
            <person name="Hasegawa A."/>
            <person name="Hameed A."/>
            <person name="Lodhi M."/>
            <person name="Johnson A."/>
            <person name="Chen E."/>
            <person name="Marra M.A."/>
            <person name="Martienssen R."/>
            <person name="McCombie W.R."/>
        </authorList>
    </citation>
    <scope>NUCLEOTIDE SEQUENCE [LARGE SCALE GENOMIC DNA]</scope>
    <source>
        <strain>cv. Columbia</strain>
    </source>
</reference>
<reference key="2">
    <citation type="journal article" date="2017" name="Plant J.">
        <title>Araport11: a complete reannotation of the Arabidopsis thaliana reference genome.</title>
        <authorList>
            <person name="Cheng C.Y."/>
            <person name="Krishnakumar V."/>
            <person name="Chan A.P."/>
            <person name="Thibaud-Nissen F."/>
            <person name="Schobel S."/>
            <person name="Town C.D."/>
        </authorList>
    </citation>
    <scope>GENOME REANNOTATION</scope>
    <source>
        <strain>cv. Columbia</strain>
    </source>
</reference>
<reference key="3">
    <citation type="journal article" date="2003" name="Science">
        <title>Empirical analysis of transcriptional activity in the Arabidopsis genome.</title>
        <authorList>
            <person name="Yamada K."/>
            <person name="Lim J."/>
            <person name="Dale J.M."/>
            <person name="Chen H."/>
            <person name="Shinn P."/>
            <person name="Palm C.J."/>
            <person name="Southwick A.M."/>
            <person name="Wu H.C."/>
            <person name="Kim C.J."/>
            <person name="Nguyen M."/>
            <person name="Pham P.K."/>
            <person name="Cheuk R.F."/>
            <person name="Karlin-Newmann G."/>
            <person name="Liu S.X."/>
            <person name="Lam B."/>
            <person name="Sakano H."/>
            <person name="Wu T."/>
            <person name="Yu G."/>
            <person name="Miranda M."/>
            <person name="Quach H.L."/>
            <person name="Tripp M."/>
            <person name="Chang C.H."/>
            <person name="Lee J.M."/>
            <person name="Toriumi M.J."/>
            <person name="Chan M.M."/>
            <person name="Tang C.C."/>
            <person name="Onodera C.S."/>
            <person name="Deng J.M."/>
            <person name="Akiyama K."/>
            <person name="Ansari Y."/>
            <person name="Arakawa T."/>
            <person name="Banh J."/>
            <person name="Banno F."/>
            <person name="Bowser L."/>
            <person name="Brooks S.Y."/>
            <person name="Carninci P."/>
            <person name="Chao Q."/>
            <person name="Choy N."/>
            <person name="Enju A."/>
            <person name="Goldsmith A.D."/>
            <person name="Gurjal M."/>
            <person name="Hansen N.F."/>
            <person name="Hayashizaki Y."/>
            <person name="Johnson-Hopson C."/>
            <person name="Hsuan V.W."/>
            <person name="Iida K."/>
            <person name="Karnes M."/>
            <person name="Khan S."/>
            <person name="Koesema E."/>
            <person name="Ishida J."/>
            <person name="Jiang P.X."/>
            <person name="Jones T."/>
            <person name="Kawai J."/>
            <person name="Kamiya A."/>
            <person name="Meyers C."/>
            <person name="Nakajima M."/>
            <person name="Narusaka M."/>
            <person name="Seki M."/>
            <person name="Sakurai T."/>
            <person name="Satou M."/>
            <person name="Tamse R."/>
            <person name="Vaysberg M."/>
            <person name="Wallender E.K."/>
            <person name="Wong C."/>
            <person name="Yamamura Y."/>
            <person name="Yuan S."/>
            <person name="Shinozaki K."/>
            <person name="Davis R.W."/>
            <person name="Theologis A."/>
            <person name="Ecker J.R."/>
        </authorList>
    </citation>
    <scope>NUCLEOTIDE SEQUENCE [LARGE SCALE MRNA]</scope>
    <source>
        <strain>cv. Columbia</strain>
    </source>
</reference>
<reference key="4">
    <citation type="journal article" date="2003" name="Genetics">
        <title>Genetic analysis of early flowering mutants in Arabidopsis defines a class of pleiotropic developmental regulator required for expression of the flowering-time switch flowering locus C.</title>
        <authorList>
            <person name="Zhang H."/>
            <person name="Ransom C."/>
            <person name="Ludwig P."/>
            <person name="van Nocker S."/>
        </authorList>
    </citation>
    <scope>FUNCTION</scope>
    <scope>DISRUPTION PHENOTYPE</scope>
</reference>
<reference key="5">
    <citation type="journal article" date="2004" name="Plant Cell">
        <title>A mechanism related to the yeast transcriptional regulator Paf1c is required for expression of the Arabidopsis FLC/MAF MADS box gene family.</title>
        <authorList>
            <person name="Oh S."/>
            <person name="Zhang H."/>
            <person name="Ludwig P."/>
            <person name="van Nocker S."/>
        </authorList>
    </citation>
    <scope>INTERACTION WITH VIP4 AND VIP6</scope>
</reference>
<reference key="6">
    <citation type="journal article" date="2006" name="Genes Cells">
        <title>Non conservation of the meiotic function of the Ski8/Rec103 homolog in Arabidopsis.</title>
        <authorList>
            <person name="Jolivet S."/>
            <person name="Vezon D."/>
            <person name="Froger N."/>
            <person name="Mercier R."/>
        </authorList>
    </citation>
    <scope>FUNCTION</scope>
    <scope>DISRUPTION PHENOTYPE</scope>
</reference>
<reference key="7">
    <citation type="journal article" date="2008" name="PLoS Genet.">
        <title>Genic and global functions for Paf1C in chromatin modification and gene expression in Arabidopsis.</title>
        <authorList>
            <person name="Oh S."/>
            <person name="Park S."/>
            <person name="van Nocker S."/>
        </authorList>
    </citation>
    <scope>FUNCTION</scope>
</reference>
<reference key="8">
    <citation type="journal article" date="2010" name="Plant Physiol.">
        <title>PLANT HOMOLOGOUS TO PARAFIBROMIN is a component of the PAF1 complex and assists in regulating expression of genes within H3K27ME3-enriched chromatin.</title>
        <authorList>
            <person name="Park S."/>
            <person name="Oh S."/>
            <person name="Ek-Ramos J."/>
            <person name="van Nocker S."/>
        </authorList>
    </citation>
    <scope>IDENTIFICATION IN THE PAF1 COMPLEX</scope>
    <scope>FUNCTION</scope>
    <scope>SUBCELLULAR LOCATION</scope>
</reference>
<reference key="9">
    <citation type="journal article" date="2011" name="Plant Physiol. Biochem.">
        <title>Characterization of brassinosteroid-regulated proteins in a nuclear-enriched fraction of Arabidopsis suspension-cultured cells.</title>
        <authorList>
            <person name="Shigeta T."/>
            <person name="Yasuda D."/>
            <person name="Mori T."/>
            <person name="Yoshimitsu Y."/>
            <person name="Nakamura Y."/>
            <person name="Yoshida S."/>
            <person name="Asami T."/>
            <person name="Okamoto S."/>
            <person name="Matsuo T."/>
        </authorList>
    </citation>
    <scope>IDENTIFICATION BY MASS SPECTROMETRY</scope>
    <scope>SUBCELLULAR LOCATION</scope>
</reference>
<reference key="10">
    <citation type="journal article" date="2012" name="Genes Cells">
        <title>Enhancement of meristem formation by bouquet-1, a mis-sense allele of the vernalization independence 3 gene encoding a WD40 repeat protein in Arabidopsis thaliana.</title>
        <authorList>
            <person name="Takagi N."/>
            <person name="Ueguchi C."/>
        </authorList>
    </citation>
    <scope>FUNCTION</scope>
    <scope>DISRUPTION PHENOTYPE</scope>
</reference>
<reference key="11">
    <citation type="journal article" date="2012" name="PLoS Genet.">
        <title>Context-dependent dual role of SKI8 homologs in mRNA synthesis and turnover.</title>
        <authorList>
            <person name="Dorcey E."/>
            <person name="Rodriguez-Villalon A."/>
            <person name="Salinas P."/>
            <person name="Santuari L."/>
            <person name="Pradervand S."/>
            <person name="Harshman K."/>
            <person name="Hardtke C.S."/>
        </authorList>
    </citation>
    <scope>IDENTIFICATION BY MASS SPECTROMETRY</scope>
    <scope>FUNCTION</scope>
    <scope>SUBUNIT</scope>
    <scope>SUBCELLULAR LOCATION</scope>
</reference>
<dbReference type="EMBL" id="AL050352">
    <property type="protein sequence ID" value="CAB43658.1"/>
    <property type="molecule type" value="Genomic_DNA"/>
</dbReference>
<dbReference type="EMBL" id="AL161575">
    <property type="protein sequence ID" value="CAB79741.1"/>
    <property type="molecule type" value="Genomic_DNA"/>
</dbReference>
<dbReference type="EMBL" id="CP002687">
    <property type="protein sequence ID" value="AEE85683.1"/>
    <property type="molecule type" value="Genomic_DNA"/>
</dbReference>
<dbReference type="EMBL" id="BT008333">
    <property type="protein sequence ID" value="AAP37692.1"/>
    <property type="molecule type" value="mRNA"/>
</dbReference>
<dbReference type="PIR" id="T08544">
    <property type="entry name" value="T08544"/>
</dbReference>
<dbReference type="RefSeq" id="NP_194712.1">
    <property type="nucleotide sequence ID" value="NM_119129.3"/>
</dbReference>
<dbReference type="SMR" id="Q9SZQ5"/>
<dbReference type="FunCoup" id="Q9SZQ5">
    <property type="interactions" value="1530"/>
</dbReference>
<dbReference type="IntAct" id="Q9SZQ5">
    <property type="interactions" value="1"/>
</dbReference>
<dbReference type="STRING" id="3702.Q9SZQ5"/>
<dbReference type="PaxDb" id="3702-AT4G29830.1"/>
<dbReference type="ProteomicsDB" id="233010"/>
<dbReference type="EnsemblPlants" id="AT4G29830.1">
    <property type="protein sequence ID" value="AT4G29830.1"/>
    <property type="gene ID" value="AT4G29830"/>
</dbReference>
<dbReference type="GeneID" id="829105"/>
<dbReference type="Gramene" id="AT4G29830.1">
    <property type="protein sequence ID" value="AT4G29830.1"/>
    <property type="gene ID" value="AT4G29830"/>
</dbReference>
<dbReference type="KEGG" id="ath:AT4G29830"/>
<dbReference type="Araport" id="AT4G29830"/>
<dbReference type="TAIR" id="AT4G29830">
    <property type="gene designation" value="VIP3"/>
</dbReference>
<dbReference type="eggNOG" id="KOG4155">
    <property type="taxonomic scope" value="Eukaryota"/>
</dbReference>
<dbReference type="HOGENOM" id="CLU_000288_57_11_1"/>
<dbReference type="InParanoid" id="Q9SZQ5"/>
<dbReference type="OMA" id="LDSSMCL"/>
<dbReference type="OrthoDB" id="538223at2759"/>
<dbReference type="PhylomeDB" id="Q9SZQ5"/>
<dbReference type="CD-CODE" id="4299E36E">
    <property type="entry name" value="Nucleolus"/>
</dbReference>
<dbReference type="PRO" id="PR:Q9SZQ5"/>
<dbReference type="Proteomes" id="UP000006548">
    <property type="component" value="Chromosome 4"/>
</dbReference>
<dbReference type="ExpressionAtlas" id="Q9SZQ5">
    <property type="expression patterns" value="baseline and differential"/>
</dbReference>
<dbReference type="GO" id="GO:0016593">
    <property type="term" value="C:Cdc73/Paf1 complex"/>
    <property type="evidence" value="ECO:0000314"/>
    <property type="project" value="UniProtKB"/>
</dbReference>
<dbReference type="GO" id="GO:0080008">
    <property type="term" value="C:Cul4-RING E3 ubiquitin ligase complex"/>
    <property type="evidence" value="ECO:0000353"/>
    <property type="project" value="TAIR"/>
</dbReference>
<dbReference type="GO" id="GO:0005829">
    <property type="term" value="C:cytosol"/>
    <property type="evidence" value="ECO:0007005"/>
    <property type="project" value="TAIR"/>
</dbReference>
<dbReference type="GO" id="GO:0005634">
    <property type="term" value="C:nucleus"/>
    <property type="evidence" value="ECO:0000314"/>
    <property type="project" value="UniProtKB"/>
</dbReference>
<dbReference type="GO" id="GO:0005886">
    <property type="term" value="C:plasma membrane"/>
    <property type="evidence" value="ECO:0007005"/>
    <property type="project" value="TAIR"/>
</dbReference>
<dbReference type="GO" id="GO:0009908">
    <property type="term" value="P:flower development"/>
    <property type="evidence" value="ECO:0007669"/>
    <property type="project" value="UniProtKB-KW"/>
</dbReference>
<dbReference type="GO" id="GO:0009910">
    <property type="term" value="P:negative regulation of flower development"/>
    <property type="evidence" value="ECO:0000315"/>
    <property type="project" value="TAIR"/>
</dbReference>
<dbReference type="GO" id="GO:1904278">
    <property type="term" value="P:positive regulation of wax biosynthetic process"/>
    <property type="evidence" value="ECO:0000316"/>
    <property type="project" value="TAIR"/>
</dbReference>
<dbReference type="GO" id="GO:0016441">
    <property type="term" value="P:post-transcriptional gene silencing"/>
    <property type="evidence" value="ECO:0000315"/>
    <property type="project" value="TAIR"/>
</dbReference>
<dbReference type="CDD" id="cd00200">
    <property type="entry name" value="WD40"/>
    <property type="match status" value="1"/>
</dbReference>
<dbReference type="FunFam" id="2.130.10.10:FF:000916">
    <property type="entry name" value="VIP3"/>
    <property type="match status" value="1"/>
</dbReference>
<dbReference type="Gene3D" id="2.130.10.10">
    <property type="entry name" value="YVTN repeat-like/Quinoprotein amine dehydrogenase"/>
    <property type="match status" value="1"/>
</dbReference>
<dbReference type="InterPro" id="IPR020472">
    <property type="entry name" value="G-protein_beta_WD-40_rep"/>
</dbReference>
<dbReference type="InterPro" id="IPR051510">
    <property type="entry name" value="SKI8"/>
</dbReference>
<dbReference type="InterPro" id="IPR015943">
    <property type="entry name" value="WD40/YVTN_repeat-like_dom_sf"/>
</dbReference>
<dbReference type="InterPro" id="IPR019775">
    <property type="entry name" value="WD40_repeat_CS"/>
</dbReference>
<dbReference type="InterPro" id="IPR036322">
    <property type="entry name" value="WD40_repeat_dom_sf"/>
</dbReference>
<dbReference type="InterPro" id="IPR001680">
    <property type="entry name" value="WD40_rpt"/>
</dbReference>
<dbReference type="PANTHER" id="PTHR44090:SF1">
    <property type="entry name" value="SUPERKILLER COMPLEX PROTEIN 8"/>
    <property type="match status" value="1"/>
</dbReference>
<dbReference type="PANTHER" id="PTHR44090">
    <property type="entry name" value="WD REPEAT-CONTAINING PROTEIN 61"/>
    <property type="match status" value="1"/>
</dbReference>
<dbReference type="Pfam" id="PF00400">
    <property type="entry name" value="WD40"/>
    <property type="match status" value="7"/>
</dbReference>
<dbReference type="PRINTS" id="PR00320">
    <property type="entry name" value="GPROTEINBRPT"/>
</dbReference>
<dbReference type="SMART" id="SM00320">
    <property type="entry name" value="WD40"/>
    <property type="match status" value="7"/>
</dbReference>
<dbReference type="SUPFAM" id="SSF50978">
    <property type="entry name" value="WD40 repeat-like"/>
    <property type="match status" value="1"/>
</dbReference>
<dbReference type="PROSITE" id="PS00678">
    <property type="entry name" value="WD_REPEATS_1"/>
    <property type="match status" value="1"/>
</dbReference>
<dbReference type="PROSITE" id="PS50082">
    <property type="entry name" value="WD_REPEATS_2"/>
    <property type="match status" value="6"/>
</dbReference>
<dbReference type="PROSITE" id="PS50294">
    <property type="entry name" value="WD_REPEATS_REGION"/>
    <property type="match status" value="1"/>
</dbReference>
<gene>
    <name evidence="10" type="primary">VIP3</name>
    <name evidence="11" type="synonym">SKI8</name>
    <name evidence="15" type="ordered locus">At4g29830</name>
    <name evidence="16" type="ORF">F27B13.70</name>
</gene>